<reference key="1">
    <citation type="journal article" date="2004" name="Genome Res.">
        <title>The status, quality, and expansion of the NIH full-length cDNA project: the Mammalian Gene Collection (MGC).</title>
        <authorList>
            <consortium name="The MGC Project Team"/>
        </authorList>
    </citation>
    <scope>NUCLEOTIDE SEQUENCE [LARGE SCALE MRNA]</scope>
    <source>
        <tissue>Muscle</tissue>
        <tissue>Skin</tissue>
    </source>
</reference>
<reference key="2">
    <citation type="journal article" date="2012" name="Cell Metab.">
        <title>Rcf1 mediates cytochrome oxidase assembly and respirasome formation, revealing heterogeneity of the enzyme complex.</title>
        <authorList>
            <person name="Vukotic M."/>
            <person name="Oeljeklaus S."/>
            <person name="Wiese S."/>
            <person name="Vogtle F.N."/>
            <person name="Meisinger C."/>
            <person name="Meyer H.E."/>
            <person name="Zieseniss A."/>
            <person name="Katschinski D.M."/>
            <person name="Jans D.C."/>
            <person name="Jakobs S."/>
            <person name="Warscheid B."/>
            <person name="Rehling P."/>
            <person name="Deckers M."/>
        </authorList>
    </citation>
    <scope>FUNCTION</scope>
    <scope>SUBUNIT</scope>
    <scope>SUBCELLULAR LOCATION</scope>
</reference>
<reference key="3">
    <citation type="journal article" date="2015" name="Proteomics">
        <title>N-terminome analysis of the human mitochondrial proteome.</title>
        <authorList>
            <person name="Vaca Jacome A.S."/>
            <person name="Rabilloud T."/>
            <person name="Schaeffer-Reiss C."/>
            <person name="Rompais M."/>
            <person name="Ayoub D."/>
            <person name="Lane L."/>
            <person name="Bairoch A."/>
            <person name="Van Dorsselaer A."/>
            <person name="Carapito C."/>
        </authorList>
    </citation>
    <scope>ACETYLATION [LARGE SCALE ANALYSIS] AT ALA-2</scope>
    <scope>CLEAVAGE OF INITIATOR METHIONINE [LARGE SCALE ANALYSIS]</scope>
    <scope>IDENTIFICATION BY MASS SPECTROMETRY [LARGE SCALE ANALYSIS]</scope>
</reference>
<gene>
    <name type="primary">HIGD2A</name>
</gene>
<proteinExistence type="evidence at protein level"/>
<accession>Q9BW72</accession>
<evidence type="ECO:0000255" key="1"/>
<evidence type="ECO:0000255" key="2">
    <source>
        <dbReference type="PROSITE-ProRule" id="PRU00836"/>
    </source>
</evidence>
<evidence type="ECO:0000269" key="3">
    <source>
    </source>
</evidence>
<evidence type="ECO:0000305" key="4">
    <source>
    </source>
</evidence>
<evidence type="ECO:0007744" key="5">
    <source>
    </source>
</evidence>
<sequence>MATPGPVIPEVPFEPSKPPVIEGLSPTVYRNPESFKEKFVRKTRENPVVPIGCLATAAALTYGLYSFHRGNSQRSQLMMRTRIAAQGFTVAAILLGLAVTAMKSRP</sequence>
<dbReference type="EMBL" id="BC000587">
    <property type="status" value="NOT_ANNOTATED_CDS"/>
    <property type="molecule type" value="mRNA"/>
</dbReference>
<dbReference type="EMBL" id="BC007502">
    <property type="protein sequence ID" value="AAH07502.1"/>
    <property type="molecule type" value="mRNA"/>
</dbReference>
<dbReference type="CCDS" id="CCDS4401.1"/>
<dbReference type="RefSeq" id="NP_620175.1">
    <property type="nucleotide sequence ID" value="NM_138820.4"/>
</dbReference>
<dbReference type="SMR" id="Q9BW72"/>
<dbReference type="BioGRID" id="128172">
    <property type="interactions" value="23"/>
</dbReference>
<dbReference type="FunCoup" id="Q9BW72">
    <property type="interactions" value="718"/>
</dbReference>
<dbReference type="IntAct" id="Q9BW72">
    <property type="interactions" value="14"/>
</dbReference>
<dbReference type="STRING" id="9606.ENSP00000274787"/>
<dbReference type="TCDB" id="8.A.112.1.5">
    <property type="family name" value="the respiratory supercomplex factor (rcf) family"/>
</dbReference>
<dbReference type="GlyGen" id="Q9BW72">
    <property type="glycosylation" value="1 site"/>
</dbReference>
<dbReference type="iPTMnet" id="Q9BW72"/>
<dbReference type="MetOSite" id="Q9BW72"/>
<dbReference type="PhosphoSitePlus" id="Q9BW72"/>
<dbReference type="SwissPalm" id="Q9BW72"/>
<dbReference type="BioMuta" id="HIGD2A"/>
<dbReference type="DMDM" id="74733402"/>
<dbReference type="jPOST" id="Q9BW72"/>
<dbReference type="MassIVE" id="Q9BW72"/>
<dbReference type="PaxDb" id="9606-ENSP00000274787"/>
<dbReference type="PeptideAtlas" id="Q9BW72"/>
<dbReference type="ProteomicsDB" id="79260"/>
<dbReference type="Pumba" id="Q9BW72"/>
<dbReference type="TopDownProteomics" id="Q9BW72"/>
<dbReference type="Antibodypedia" id="63622">
    <property type="antibodies" value="79 antibodies from 19 providers"/>
</dbReference>
<dbReference type="DNASU" id="192286"/>
<dbReference type="Ensembl" id="ENST00000274787.3">
    <property type="protein sequence ID" value="ENSP00000274787.2"/>
    <property type="gene ID" value="ENSG00000146066.3"/>
</dbReference>
<dbReference type="GeneID" id="192286"/>
<dbReference type="KEGG" id="hsa:192286"/>
<dbReference type="MANE-Select" id="ENST00000274787.3">
    <property type="protein sequence ID" value="ENSP00000274787.2"/>
    <property type="RefSeq nucleotide sequence ID" value="NM_138820.4"/>
    <property type="RefSeq protein sequence ID" value="NP_620175.1"/>
</dbReference>
<dbReference type="UCSC" id="uc003meg.4">
    <property type="organism name" value="human"/>
</dbReference>
<dbReference type="AGR" id="HGNC:28311"/>
<dbReference type="CTD" id="192286"/>
<dbReference type="DisGeNET" id="192286"/>
<dbReference type="GeneCards" id="HIGD2A"/>
<dbReference type="HGNC" id="HGNC:28311">
    <property type="gene designation" value="HIGD2A"/>
</dbReference>
<dbReference type="HPA" id="ENSG00000146066">
    <property type="expression patterns" value="Low tissue specificity"/>
</dbReference>
<dbReference type="MIM" id="620788">
    <property type="type" value="gene"/>
</dbReference>
<dbReference type="neXtProt" id="NX_Q9BW72"/>
<dbReference type="PharmGKB" id="PA142671685"/>
<dbReference type="VEuPathDB" id="HostDB:ENSG00000146066"/>
<dbReference type="eggNOG" id="KOG4431">
    <property type="taxonomic scope" value="Eukaryota"/>
</dbReference>
<dbReference type="GeneTree" id="ENSGT00910000144291"/>
<dbReference type="HOGENOM" id="CLU_087356_4_0_1"/>
<dbReference type="InParanoid" id="Q9BW72"/>
<dbReference type="OMA" id="FHRGHSQ"/>
<dbReference type="OrthoDB" id="6604018at2759"/>
<dbReference type="PAN-GO" id="Q9BW72">
    <property type="GO annotations" value="2 GO annotations based on evolutionary models"/>
</dbReference>
<dbReference type="PhylomeDB" id="Q9BW72"/>
<dbReference type="TreeFam" id="TF314628"/>
<dbReference type="PathwayCommons" id="Q9BW72"/>
<dbReference type="Reactome" id="R-HSA-9864848">
    <property type="pathway name" value="Complex IV assembly"/>
</dbReference>
<dbReference type="SignaLink" id="Q9BW72"/>
<dbReference type="BioGRID-ORCS" id="192286">
    <property type="hits" value="157 hits in 1124 CRISPR screens"/>
</dbReference>
<dbReference type="GenomeRNAi" id="192286"/>
<dbReference type="Pharos" id="Q9BW72">
    <property type="development level" value="Tbio"/>
</dbReference>
<dbReference type="PRO" id="PR:Q9BW72"/>
<dbReference type="Proteomes" id="UP000005640">
    <property type="component" value="Chromosome 5"/>
</dbReference>
<dbReference type="RNAct" id="Q9BW72">
    <property type="molecule type" value="protein"/>
</dbReference>
<dbReference type="Bgee" id="ENSG00000146066">
    <property type="expression patterns" value="Expressed in hindlimb stylopod muscle and 97 other cell types or tissues"/>
</dbReference>
<dbReference type="ExpressionAtlas" id="Q9BW72">
    <property type="expression patterns" value="baseline and differential"/>
</dbReference>
<dbReference type="GO" id="GO:0005743">
    <property type="term" value="C:mitochondrial inner membrane"/>
    <property type="evidence" value="ECO:0007669"/>
    <property type="project" value="UniProtKB-SubCell"/>
</dbReference>
<dbReference type="GO" id="GO:0005739">
    <property type="term" value="C:mitochondrion"/>
    <property type="evidence" value="ECO:0006056"/>
    <property type="project" value="FlyBase"/>
</dbReference>
<dbReference type="GO" id="GO:0097250">
    <property type="term" value="P:mitochondrial respirasome assembly"/>
    <property type="evidence" value="ECO:0000318"/>
    <property type="project" value="GO_Central"/>
</dbReference>
<dbReference type="GO" id="GO:0043066">
    <property type="term" value="P:negative regulation of apoptotic process"/>
    <property type="evidence" value="ECO:0000314"/>
    <property type="project" value="MGI"/>
</dbReference>
<dbReference type="Gene3D" id="6.10.140.1320">
    <property type="match status" value="1"/>
</dbReference>
<dbReference type="InterPro" id="IPR007667">
    <property type="entry name" value="Hypoxia_induced_domain"/>
</dbReference>
<dbReference type="InterPro" id="IPR050355">
    <property type="entry name" value="RCF1"/>
</dbReference>
<dbReference type="PANTHER" id="PTHR12297:SF11">
    <property type="entry name" value="HIG1 DOMAIN FAMILY MEMBER 2A, MITOCHONDRIAL"/>
    <property type="match status" value="1"/>
</dbReference>
<dbReference type="PANTHER" id="PTHR12297">
    <property type="entry name" value="HYPOXIA-INDUCBILE GENE 1 HIG1 -RELATED"/>
    <property type="match status" value="1"/>
</dbReference>
<dbReference type="Pfam" id="PF04588">
    <property type="entry name" value="HIG_1_N"/>
    <property type="match status" value="1"/>
</dbReference>
<dbReference type="PROSITE" id="PS51503">
    <property type="entry name" value="HIG1"/>
    <property type="match status" value="1"/>
</dbReference>
<organism>
    <name type="scientific">Homo sapiens</name>
    <name type="common">Human</name>
    <dbReference type="NCBI Taxonomy" id="9606"/>
    <lineage>
        <taxon>Eukaryota</taxon>
        <taxon>Metazoa</taxon>
        <taxon>Chordata</taxon>
        <taxon>Craniata</taxon>
        <taxon>Vertebrata</taxon>
        <taxon>Euteleostomi</taxon>
        <taxon>Mammalia</taxon>
        <taxon>Eutheria</taxon>
        <taxon>Euarchontoglires</taxon>
        <taxon>Primates</taxon>
        <taxon>Haplorrhini</taxon>
        <taxon>Catarrhini</taxon>
        <taxon>Hominidae</taxon>
        <taxon>Homo</taxon>
    </lineage>
</organism>
<feature type="initiator methionine" description="Removed" evidence="5">
    <location>
        <position position="1"/>
    </location>
</feature>
<feature type="chain" id="PRO_0000215777" description="HIG1 domain family member 2A, mitochondrial">
    <location>
        <begin position="2"/>
        <end position="106"/>
    </location>
</feature>
<feature type="transmembrane region" description="Helical" evidence="2">
    <location>
        <begin position="47"/>
        <end position="67"/>
    </location>
</feature>
<feature type="transmembrane region" description="Helical" evidence="2">
    <location>
        <begin position="83"/>
        <end position="103"/>
    </location>
</feature>
<feature type="topological domain" description="Mitochondrial matrix" evidence="1">
    <location>
        <begin position="104"/>
        <end position="106"/>
    </location>
</feature>
<feature type="domain" description="HIG1" evidence="2">
    <location>
        <begin position="20"/>
        <end position="106"/>
    </location>
</feature>
<feature type="modified residue" description="N-acetylalanine" evidence="5">
    <location>
        <position position="2"/>
    </location>
</feature>
<name>HIG2A_HUMAN</name>
<protein>
    <recommendedName>
        <fullName>HIG1 domain family member 2A, mitochondrial</fullName>
    </recommendedName>
    <alternativeName>
        <fullName>RCF1 homolog B</fullName>
        <shortName>RCF1b</shortName>
    </alternativeName>
</protein>
<comment type="function">
    <text evidence="3">Proposed subunit of cytochrome c oxidase (COX, complex IV), which is the terminal component of the mitochondrial respiratory chain that catalyzes the reduction of oxygen to water. May be involved in cytochrome c oxidase activity. May play a role in the assembly of respiratory supercomplexes.</text>
</comment>
<comment type="subunit">
    <text evidence="3">Associates with cytochrome c oxidase (COX, complex IV); proposed complex component.</text>
</comment>
<comment type="subcellular location">
    <subcellularLocation>
        <location evidence="2 3">Mitochondrion membrane</location>
        <topology evidence="2 3">Multi-pass membrane protein</topology>
    </subcellularLocation>
    <subcellularLocation>
        <location evidence="4">Mitochondrion inner membrane</location>
    </subcellularLocation>
</comment>
<keyword id="KW-0007">Acetylation</keyword>
<keyword id="KW-0249">Electron transport</keyword>
<keyword id="KW-0472">Membrane</keyword>
<keyword id="KW-0496">Mitochondrion</keyword>
<keyword id="KW-0999">Mitochondrion inner membrane</keyword>
<keyword id="KW-1267">Proteomics identification</keyword>
<keyword id="KW-1185">Reference proteome</keyword>
<keyword id="KW-0679">Respiratory chain</keyword>
<keyword id="KW-0812">Transmembrane</keyword>
<keyword id="KW-1133">Transmembrane helix</keyword>
<keyword id="KW-0813">Transport</keyword>